<evidence type="ECO:0000255" key="1">
    <source>
        <dbReference type="HAMAP-Rule" id="MF_00291"/>
    </source>
</evidence>
<evidence type="ECO:0000305" key="2"/>
<name>RS2_ECOL5</name>
<proteinExistence type="inferred from homology"/>
<protein>
    <recommendedName>
        <fullName evidence="1">Small ribosomal subunit protein uS2</fullName>
    </recommendedName>
    <alternativeName>
        <fullName evidence="2">30S ribosomal protein S2</fullName>
    </alternativeName>
</protein>
<keyword id="KW-0687">Ribonucleoprotein</keyword>
<keyword id="KW-0689">Ribosomal protein</keyword>
<dbReference type="EMBL" id="CP000247">
    <property type="protein sequence ID" value="ABG68217.1"/>
    <property type="molecule type" value="Genomic_DNA"/>
</dbReference>
<dbReference type="RefSeq" id="WP_000246882.1">
    <property type="nucleotide sequence ID" value="NC_008253.1"/>
</dbReference>
<dbReference type="SMR" id="Q0TLG4"/>
<dbReference type="GeneID" id="89519558"/>
<dbReference type="KEGG" id="ecp:ECP_0177"/>
<dbReference type="HOGENOM" id="CLU_040318_1_2_6"/>
<dbReference type="Proteomes" id="UP000009182">
    <property type="component" value="Chromosome"/>
</dbReference>
<dbReference type="GO" id="GO:0022627">
    <property type="term" value="C:cytosolic small ribosomal subunit"/>
    <property type="evidence" value="ECO:0007669"/>
    <property type="project" value="TreeGrafter"/>
</dbReference>
<dbReference type="GO" id="GO:0003735">
    <property type="term" value="F:structural constituent of ribosome"/>
    <property type="evidence" value="ECO:0007669"/>
    <property type="project" value="InterPro"/>
</dbReference>
<dbReference type="GO" id="GO:0006412">
    <property type="term" value="P:translation"/>
    <property type="evidence" value="ECO:0007669"/>
    <property type="project" value="UniProtKB-UniRule"/>
</dbReference>
<dbReference type="CDD" id="cd01425">
    <property type="entry name" value="RPS2"/>
    <property type="match status" value="1"/>
</dbReference>
<dbReference type="FunFam" id="1.10.287.610:FF:000001">
    <property type="entry name" value="30S ribosomal protein S2"/>
    <property type="match status" value="1"/>
</dbReference>
<dbReference type="Gene3D" id="3.40.50.10490">
    <property type="entry name" value="Glucose-6-phosphate isomerase like protein, domain 1"/>
    <property type="match status" value="1"/>
</dbReference>
<dbReference type="Gene3D" id="1.10.287.610">
    <property type="entry name" value="Helix hairpin bin"/>
    <property type="match status" value="1"/>
</dbReference>
<dbReference type="HAMAP" id="MF_00291_B">
    <property type="entry name" value="Ribosomal_uS2_B"/>
    <property type="match status" value="1"/>
</dbReference>
<dbReference type="InterPro" id="IPR001865">
    <property type="entry name" value="Ribosomal_uS2"/>
</dbReference>
<dbReference type="InterPro" id="IPR005706">
    <property type="entry name" value="Ribosomal_uS2_bac/mit/plastid"/>
</dbReference>
<dbReference type="InterPro" id="IPR018130">
    <property type="entry name" value="Ribosomal_uS2_CS"/>
</dbReference>
<dbReference type="InterPro" id="IPR023591">
    <property type="entry name" value="Ribosomal_uS2_flav_dom_sf"/>
</dbReference>
<dbReference type="NCBIfam" id="TIGR01011">
    <property type="entry name" value="rpsB_bact"/>
    <property type="match status" value="1"/>
</dbReference>
<dbReference type="PANTHER" id="PTHR12534">
    <property type="entry name" value="30S RIBOSOMAL PROTEIN S2 PROKARYOTIC AND ORGANELLAR"/>
    <property type="match status" value="1"/>
</dbReference>
<dbReference type="PANTHER" id="PTHR12534:SF0">
    <property type="entry name" value="SMALL RIBOSOMAL SUBUNIT PROTEIN US2M"/>
    <property type="match status" value="1"/>
</dbReference>
<dbReference type="Pfam" id="PF00318">
    <property type="entry name" value="Ribosomal_S2"/>
    <property type="match status" value="1"/>
</dbReference>
<dbReference type="PRINTS" id="PR00395">
    <property type="entry name" value="RIBOSOMALS2"/>
</dbReference>
<dbReference type="SUPFAM" id="SSF52313">
    <property type="entry name" value="Ribosomal protein S2"/>
    <property type="match status" value="1"/>
</dbReference>
<dbReference type="PROSITE" id="PS00962">
    <property type="entry name" value="RIBOSOMAL_S2_1"/>
    <property type="match status" value="1"/>
</dbReference>
<dbReference type="PROSITE" id="PS00963">
    <property type="entry name" value="RIBOSOMAL_S2_2"/>
    <property type="match status" value="1"/>
</dbReference>
<accession>Q0TLG4</accession>
<gene>
    <name evidence="1" type="primary">rpsB</name>
    <name type="ordered locus">ECP_0177</name>
</gene>
<feature type="chain" id="PRO_1000003954" description="Small ribosomal subunit protein uS2">
    <location>
        <begin position="1"/>
        <end position="241"/>
    </location>
</feature>
<reference key="1">
    <citation type="journal article" date="2006" name="Mol. Microbiol.">
        <title>Role of pathogenicity island-associated integrases in the genome plasticity of uropathogenic Escherichia coli strain 536.</title>
        <authorList>
            <person name="Hochhut B."/>
            <person name="Wilde C."/>
            <person name="Balling G."/>
            <person name="Middendorf B."/>
            <person name="Dobrindt U."/>
            <person name="Brzuszkiewicz E."/>
            <person name="Gottschalk G."/>
            <person name="Carniel E."/>
            <person name="Hacker J."/>
        </authorList>
    </citation>
    <scope>NUCLEOTIDE SEQUENCE [LARGE SCALE GENOMIC DNA]</scope>
    <source>
        <strain>536 / UPEC</strain>
    </source>
</reference>
<organism>
    <name type="scientific">Escherichia coli O6:K15:H31 (strain 536 / UPEC)</name>
    <dbReference type="NCBI Taxonomy" id="362663"/>
    <lineage>
        <taxon>Bacteria</taxon>
        <taxon>Pseudomonadati</taxon>
        <taxon>Pseudomonadota</taxon>
        <taxon>Gammaproteobacteria</taxon>
        <taxon>Enterobacterales</taxon>
        <taxon>Enterobacteriaceae</taxon>
        <taxon>Escherichia</taxon>
    </lineage>
</organism>
<sequence>MATVSMRDMLKAGVHFGHQTRYWNPKMKPFIFGARNKVHIINLEKTVPMFNEALAELNKIASRKGKILFVGTKRAASEAVKDAALSCDQFFVNHRWLGGMLTNWKTVRQSIKRLKDLETQSQDGTFDKLTKKEALMRTRELEKLENSLGGIKDMGGLPDALFVIDADHEHIAIKEANNLGIPVFAIVDTNSDPDGVDFVIPGNDDAIRAVTLYLGAVAATVREGRSQDLASQAEESFVEAE</sequence>
<comment type="similarity">
    <text evidence="1">Belongs to the universal ribosomal protein uS2 family.</text>
</comment>